<sequence length="178" mass="18865">MTTDDLKRLVRTVPDFPSPGILFRDITTLIAHGEGLSACIDHLAHKARAAGAQAVAGMEARGFIFGAAVAARMGLGFIPVRKPGKLPVKTIGIDYALEYGRDRLEIDPTAIREGQRVVIVDDLIATGGTALAAAELLRMAGAHVTHALFVIDLPELHGAERLRGAGLTVEALMDFPGH</sequence>
<accession>Q2GAK1</accession>
<protein>
    <recommendedName>
        <fullName evidence="1">Adenine phosphoribosyltransferase</fullName>
        <shortName evidence="1">APRT</shortName>
        <ecNumber evidence="1">2.4.2.7</ecNumber>
    </recommendedName>
</protein>
<organism>
    <name type="scientific">Novosphingobium aromaticivorans (strain ATCC 700278 / DSM 12444 / CCUG 56034 / CIP 105152 / NBRC 16084 / F199)</name>
    <dbReference type="NCBI Taxonomy" id="279238"/>
    <lineage>
        <taxon>Bacteria</taxon>
        <taxon>Pseudomonadati</taxon>
        <taxon>Pseudomonadota</taxon>
        <taxon>Alphaproteobacteria</taxon>
        <taxon>Sphingomonadales</taxon>
        <taxon>Sphingomonadaceae</taxon>
        <taxon>Novosphingobium</taxon>
    </lineage>
</organism>
<gene>
    <name evidence="1" type="primary">apt</name>
    <name type="ordered locus">Saro_0675</name>
</gene>
<name>APT_NOVAD</name>
<comment type="function">
    <text evidence="1">Catalyzes a salvage reaction resulting in the formation of AMP, that is energically less costly than de novo synthesis.</text>
</comment>
<comment type="catalytic activity">
    <reaction evidence="1">
        <text>AMP + diphosphate = 5-phospho-alpha-D-ribose 1-diphosphate + adenine</text>
        <dbReference type="Rhea" id="RHEA:16609"/>
        <dbReference type="ChEBI" id="CHEBI:16708"/>
        <dbReference type="ChEBI" id="CHEBI:33019"/>
        <dbReference type="ChEBI" id="CHEBI:58017"/>
        <dbReference type="ChEBI" id="CHEBI:456215"/>
        <dbReference type="EC" id="2.4.2.7"/>
    </reaction>
</comment>
<comment type="pathway">
    <text evidence="1">Purine metabolism; AMP biosynthesis via salvage pathway; AMP from adenine: step 1/1.</text>
</comment>
<comment type="subunit">
    <text evidence="1">Homodimer.</text>
</comment>
<comment type="subcellular location">
    <subcellularLocation>
        <location evidence="1">Cytoplasm</location>
    </subcellularLocation>
</comment>
<comment type="similarity">
    <text evidence="1">Belongs to the purine/pyrimidine phosphoribosyltransferase family.</text>
</comment>
<dbReference type="EC" id="2.4.2.7" evidence="1"/>
<dbReference type="EMBL" id="CP000248">
    <property type="protein sequence ID" value="ABD25122.1"/>
    <property type="molecule type" value="Genomic_DNA"/>
</dbReference>
<dbReference type="RefSeq" id="WP_011444336.1">
    <property type="nucleotide sequence ID" value="NC_007794.1"/>
</dbReference>
<dbReference type="SMR" id="Q2GAK1"/>
<dbReference type="STRING" id="279238.Saro_0675"/>
<dbReference type="KEGG" id="nar:Saro_0675"/>
<dbReference type="eggNOG" id="COG0503">
    <property type="taxonomic scope" value="Bacteria"/>
</dbReference>
<dbReference type="HOGENOM" id="CLU_063339_3_0_5"/>
<dbReference type="UniPathway" id="UPA00588">
    <property type="reaction ID" value="UER00646"/>
</dbReference>
<dbReference type="Proteomes" id="UP000009134">
    <property type="component" value="Chromosome"/>
</dbReference>
<dbReference type="GO" id="GO:0005737">
    <property type="term" value="C:cytoplasm"/>
    <property type="evidence" value="ECO:0007669"/>
    <property type="project" value="UniProtKB-SubCell"/>
</dbReference>
<dbReference type="GO" id="GO:0002055">
    <property type="term" value="F:adenine binding"/>
    <property type="evidence" value="ECO:0007669"/>
    <property type="project" value="TreeGrafter"/>
</dbReference>
<dbReference type="GO" id="GO:0003999">
    <property type="term" value="F:adenine phosphoribosyltransferase activity"/>
    <property type="evidence" value="ECO:0007669"/>
    <property type="project" value="UniProtKB-UniRule"/>
</dbReference>
<dbReference type="GO" id="GO:0016208">
    <property type="term" value="F:AMP binding"/>
    <property type="evidence" value="ECO:0007669"/>
    <property type="project" value="TreeGrafter"/>
</dbReference>
<dbReference type="GO" id="GO:0006168">
    <property type="term" value="P:adenine salvage"/>
    <property type="evidence" value="ECO:0007669"/>
    <property type="project" value="InterPro"/>
</dbReference>
<dbReference type="GO" id="GO:0044209">
    <property type="term" value="P:AMP salvage"/>
    <property type="evidence" value="ECO:0007669"/>
    <property type="project" value="UniProtKB-UniRule"/>
</dbReference>
<dbReference type="GO" id="GO:0006166">
    <property type="term" value="P:purine ribonucleoside salvage"/>
    <property type="evidence" value="ECO:0007669"/>
    <property type="project" value="UniProtKB-KW"/>
</dbReference>
<dbReference type="CDD" id="cd06223">
    <property type="entry name" value="PRTases_typeI"/>
    <property type="match status" value="1"/>
</dbReference>
<dbReference type="FunFam" id="3.40.50.2020:FF:000021">
    <property type="entry name" value="Adenine phosphoribosyltransferase"/>
    <property type="match status" value="1"/>
</dbReference>
<dbReference type="Gene3D" id="3.40.50.2020">
    <property type="match status" value="1"/>
</dbReference>
<dbReference type="HAMAP" id="MF_00004">
    <property type="entry name" value="Aden_phosphoribosyltr"/>
    <property type="match status" value="1"/>
</dbReference>
<dbReference type="InterPro" id="IPR005764">
    <property type="entry name" value="Ade_phspho_trans"/>
</dbReference>
<dbReference type="InterPro" id="IPR000836">
    <property type="entry name" value="PRibTrfase_dom"/>
</dbReference>
<dbReference type="InterPro" id="IPR029057">
    <property type="entry name" value="PRTase-like"/>
</dbReference>
<dbReference type="InterPro" id="IPR050054">
    <property type="entry name" value="UPRTase/APRTase"/>
</dbReference>
<dbReference type="NCBIfam" id="TIGR01090">
    <property type="entry name" value="apt"/>
    <property type="match status" value="1"/>
</dbReference>
<dbReference type="NCBIfam" id="NF002634">
    <property type="entry name" value="PRK02304.1-3"/>
    <property type="match status" value="1"/>
</dbReference>
<dbReference type="NCBIfam" id="NF002636">
    <property type="entry name" value="PRK02304.1-5"/>
    <property type="match status" value="1"/>
</dbReference>
<dbReference type="PANTHER" id="PTHR32315">
    <property type="entry name" value="ADENINE PHOSPHORIBOSYLTRANSFERASE"/>
    <property type="match status" value="1"/>
</dbReference>
<dbReference type="PANTHER" id="PTHR32315:SF3">
    <property type="entry name" value="ADENINE PHOSPHORIBOSYLTRANSFERASE"/>
    <property type="match status" value="1"/>
</dbReference>
<dbReference type="Pfam" id="PF00156">
    <property type="entry name" value="Pribosyltran"/>
    <property type="match status" value="1"/>
</dbReference>
<dbReference type="SUPFAM" id="SSF53271">
    <property type="entry name" value="PRTase-like"/>
    <property type="match status" value="1"/>
</dbReference>
<dbReference type="PROSITE" id="PS00103">
    <property type="entry name" value="PUR_PYR_PR_TRANSFER"/>
    <property type="match status" value="1"/>
</dbReference>
<reference key="1">
    <citation type="submission" date="2006-01" db="EMBL/GenBank/DDBJ databases">
        <title>Complete sequence of Novosphingobium aromaticivorans DSM 12444.</title>
        <authorList>
            <consortium name="US DOE Joint Genome Institute"/>
            <person name="Copeland A."/>
            <person name="Lucas S."/>
            <person name="Lapidus A."/>
            <person name="Barry K."/>
            <person name="Detter J.C."/>
            <person name="Glavina T."/>
            <person name="Hammon N."/>
            <person name="Israni S."/>
            <person name="Pitluck S."/>
            <person name="Chain P."/>
            <person name="Malfatti S."/>
            <person name="Shin M."/>
            <person name="Vergez L."/>
            <person name="Schmutz J."/>
            <person name="Larimer F."/>
            <person name="Land M."/>
            <person name="Kyrpides N."/>
            <person name="Ivanova N."/>
            <person name="Fredrickson J."/>
            <person name="Balkwill D."/>
            <person name="Romine M.F."/>
            <person name="Richardson P."/>
        </authorList>
    </citation>
    <scope>NUCLEOTIDE SEQUENCE [LARGE SCALE GENOMIC DNA]</scope>
    <source>
        <strain>ATCC 700278 / DSM 12444 / CCUG 56034 / CIP 105152 / NBRC 16084 / F199</strain>
    </source>
</reference>
<proteinExistence type="inferred from homology"/>
<evidence type="ECO:0000255" key="1">
    <source>
        <dbReference type="HAMAP-Rule" id="MF_00004"/>
    </source>
</evidence>
<feature type="chain" id="PRO_0000321378" description="Adenine phosphoribosyltransferase">
    <location>
        <begin position="1"/>
        <end position="178"/>
    </location>
</feature>
<keyword id="KW-0963">Cytoplasm</keyword>
<keyword id="KW-0328">Glycosyltransferase</keyword>
<keyword id="KW-0660">Purine salvage</keyword>
<keyword id="KW-1185">Reference proteome</keyword>
<keyword id="KW-0808">Transferase</keyword>